<accession>O29973</accession>
<name>Y266_ARCFU</name>
<reference key="1">
    <citation type="journal article" date="1997" name="Nature">
        <title>The complete genome sequence of the hyperthermophilic, sulphate-reducing archaeon Archaeoglobus fulgidus.</title>
        <authorList>
            <person name="Klenk H.-P."/>
            <person name="Clayton R.A."/>
            <person name="Tomb J.-F."/>
            <person name="White O."/>
            <person name="Nelson K.E."/>
            <person name="Ketchum K.A."/>
            <person name="Dodson R.J."/>
            <person name="Gwinn M.L."/>
            <person name="Hickey E.K."/>
            <person name="Peterson J.D."/>
            <person name="Richardson D.L."/>
            <person name="Kerlavage A.R."/>
            <person name="Graham D.E."/>
            <person name="Kyrpides N.C."/>
            <person name="Fleischmann R.D."/>
            <person name="Quackenbush J."/>
            <person name="Lee N.H."/>
            <person name="Sutton G.G."/>
            <person name="Gill S.R."/>
            <person name="Kirkness E.F."/>
            <person name="Dougherty B.A."/>
            <person name="McKenney K."/>
            <person name="Adams M.D."/>
            <person name="Loftus B.J."/>
            <person name="Peterson S.N."/>
            <person name="Reich C.I."/>
            <person name="McNeil L.K."/>
            <person name="Badger J.H."/>
            <person name="Glodek A."/>
            <person name="Zhou L."/>
            <person name="Overbeek R."/>
            <person name="Gocayne J.D."/>
            <person name="Weidman J.F."/>
            <person name="McDonald L.A."/>
            <person name="Utterback T.R."/>
            <person name="Cotton M.D."/>
            <person name="Spriggs T."/>
            <person name="Artiach P."/>
            <person name="Kaine B.P."/>
            <person name="Sykes S.M."/>
            <person name="Sadow P.W."/>
            <person name="D'Andrea K.P."/>
            <person name="Bowman C."/>
            <person name="Fujii C."/>
            <person name="Garland S.A."/>
            <person name="Mason T.M."/>
            <person name="Olsen G.J."/>
            <person name="Fraser C.M."/>
            <person name="Smith H.O."/>
            <person name="Woese C.R."/>
            <person name="Venter J.C."/>
        </authorList>
    </citation>
    <scope>NUCLEOTIDE SEQUENCE [LARGE SCALE GENOMIC DNA]</scope>
    <source>
        <strain>ATCC 49558 / DSM 4304 / JCM 9628 / NBRC 100126 / VC-16</strain>
    </source>
</reference>
<proteinExistence type="inferred from homology"/>
<sequence>MKKWIVLALTVTFWGLAFTAIKYSVRFLSPIAIASLRFAIANTLFAVIIILGKRIKWKDLPKVFALGIFGVSVYHVFLNLGEVYISSGVASVVISLAPIFVLILSAIFLRERITYSKVVGIIIAFLGVVVISEPSYANIYGIALVMVSTVAAAIYTTFGKSLLSKYNPITLTSNAMVLGSIPLYPFLPDSIRSLGGDLNLIGSIVFLGIFSTFFGYLGWYYFLEKEEASRASVFLLAIPVVSLLAGNILLAEPLTLRTVAGSGLVLLGIYIVVRKR</sequence>
<keyword id="KW-1003">Cell membrane</keyword>
<keyword id="KW-0472">Membrane</keyword>
<keyword id="KW-1185">Reference proteome</keyword>
<keyword id="KW-0677">Repeat</keyword>
<keyword id="KW-0812">Transmembrane</keyword>
<keyword id="KW-1133">Transmembrane helix</keyword>
<keyword id="KW-0813">Transport</keyword>
<organism>
    <name type="scientific">Archaeoglobus fulgidus (strain ATCC 49558 / DSM 4304 / JCM 9628 / NBRC 100126 / VC-16)</name>
    <dbReference type="NCBI Taxonomy" id="224325"/>
    <lineage>
        <taxon>Archaea</taxon>
        <taxon>Methanobacteriati</taxon>
        <taxon>Methanobacteriota</taxon>
        <taxon>Archaeoglobi</taxon>
        <taxon>Archaeoglobales</taxon>
        <taxon>Archaeoglobaceae</taxon>
        <taxon>Archaeoglobus</taxon>
    </lineage>
</organism>
<protein>
    <recommendedName>
        <fullName>Uncharacterized transporter AF_0266</fullName>
    </recommendedName>
</protein>
<dbReference type="EMBL" id="AE000782">
    <property type="protein sequence ID" value="AAB90963.1"/>
    <property type="molecule type" value="Genomic_DNA"/>
</dbReference>
<dbReference type="PIR" id="B69283">
    <property type="entry name" value="B69283"/>
</dbReference>
<dbReference type="SMR" id="O29973"/>
<dbReference type="STRING" id="224325.AF_0266"/>
<dbReference type="TCDB" id="2.A.7.3.28">
    <property type="family name" value="the drug/metabolite transporter (dmt) superfamily"/>
</dbReference>
<dbReference type="PaxDb" id="224325-AF_0266"/>
<dbReference type="EnsemblBacteria" id="AAB90963">
    <property type="protein sequence ID" value="AAB90963"/>
    <property type="gene ID" value="AF_0266"/>
</dbReference>
<dbReference type="KEGG" id="afu:AF_0266"/>
<dbReference type="eggNOG" id="arCOG00271">
    <property type="taxonomic scope" value="Archaea"/>
</dbReference>
<dbReference type="HOGENOM" id="CLU_033863_4_1_2"/>
<dbReference type="OrthoDB" id="17861at2157"/>
<dbReference type="PhylomeDB" id="O29973"/>
<dbReference type="Proteomes" id="UP000002199">
    <property type="component" value="Chromosome"/>
</dbReference>
<dbReference type="GO" id="GO:0005886">
    <property type="term" value="C:plasma membrane"/>
    <property type="evidence" value="ECO:0007669"/>
    <property type="project" value="UniProtKB-SubCell"/>
</dbReference>
<dbReference type="InterPro" id="IPR052756">
    <property type="entry name" value="Alkyne_AA_exporter"/>
</dbReference>
<dbReference type="InterPro" id="IPR000620">
    <property type="entry name" value="EamA_dom"/>
</dbReference>
<dbReference type="PANTHER" id="PTHR12715:SF4">
    <property type="entry name" value="EAMA DOMAIN-CONTAINING PROTEIN"/>
    <property type="match status" value="1"/>
</dbReference>
<dbReference type="PANTHER" id="PTHR12715">
    <property type="entry name" value="TRANSPORTER, DRUG/METABOLITE EXPORTER FAMILY"/>
    <property type="match status" value="1"/>
</dbReference>
<dbReference type="Pfam" id="PF00892">
    <property type="entry name" value="EamA"/>
    <property type="match status" value="2"/>
</dbReference>
<dbReference type="SUPFAM" id="SSF103481">
    <property type="entry name" value="Multidrug resistance efflux transporter EmrE"/>
    <property type="match status" value="2"/>
</dbReference>
<feature type="chain" id="PRO_0000108201" description="Uncharacterized transporter AF_0266">
    <location>
        <begin position="1"/>
        <end position="276"/>
    </location>
</feature>
<feature type="transmembrane region" description="Helical" evidence="1">
    <location>
        <begin position="5"/>
        <end position="25"/>
    </location>
</feature>
<feature type="transmembrane region" description="Helical" evidence="1">
    <location>
        <begin position="31"/>
        <end position="51"/>
    </location>
</feature>
<feature type="transmembrane region" description="Helical" evidence="1">
    <location>
        <begin position="63"/>
        <end position="83"/>
    </location>
</feature>
<feature type="transmembrane region" description="Helical" evidence="1">
    <location>
        <begin position="89"/>
        <end position="109"/>
    </location>
</feature>
<feature type="transmembrane region" description="Helical" evidence="1">
    <location>
        <begin position="119"/>
        <end position="139"/>
    </location>
</feature>
<feature type="transmembrane region" description="Helical" evidence="1">
    <location>
        <begin position="142"/>
        <end position="162"/>
    </location>
</feature>
<feature type="transmembrane region" description="Helical" evidence="1">
    <location>
        <begin position="168"/>
        <end position="188"/>
    </location>
</feature>
<feature type="transmembrane region" description="Helical" evidence="1">
    <location>
        <begin position="200"/>
        <end position="220"/>
    </location>
</feature>
<feature type="transmembrane region" description="Helical" evidence="1">
    <location>
        <begin position="231"/>
        <end position="251"/>
    </location>
</feature>
<feature type="transmembrane region" description="Helical" evidence="1">
    <location>
        <begin position="253"/>
        <end position="273"/>
    </location>
</feature>
<feature type="domain" description="EamA 1">
    <location>
        <begin position="12"/>
        <end position="133"/>
    </location>
</feature>
<feature type="domain" description="EamA 2">
    <location>
        <begin position="150"/>
        <end position="274"/>
    </location>
</feature>
<comment type="subcellular location">
    <subcellularLocation>
        <location evidence="2">Cell membrane</location>
        <topology evidence="2">Multi-pass membrane protein</topology>
    </subcellularLocation>
</comment>
<comment type="similarity">
    <text evidence="2">Belongs to the EamA transporter family.</text>
</comment>
<evidence type="ECO:0000255" key="1"/>
<evidence type="ECO:0000305" key="2"/>
<gene>
    <name type="ordered locus">AF_0266</name>
</gene>